<protein>
    <recommendedName>
        <fullName>Putative trafficking protein particle complex subunit TRS31</fullName>
    </recommendedName>
</protein>
<accession>Q8SU25</accession>
<name>TRS31_ENCCU</name>
<gene>
    <name type="primary">TRS31</name>
    <name type="ordered locus">ECU11_1320</name>
</gene>
<proteinExistence type="evidence at protein level"/>
<feature type="chain" id="PRO_0000383112" description="Putative trafficking protein particle complex subunit TRS31">
    <location>
        <begin position="1"/>
        <end position="146"/>
    </location>
</feature>
<sequence length="146" mass="16575">MSYLVCGMIEYLMEQRSDIEADLKSIGYEVGIKLLELCNFEREVRISTLLYRATFDLLSLVSDSDRRVEKARDVDRTYLLTDSDGLFSRFISVPDEWNGLSADSIVCGMIQAALMASGYDSEVTAFPEPSENLPNRVIFQIRILDL</sequence>
<evidence type="ECO:0000250" key="1"/>
<evidence type="ECO:0000269" key="2">
    <source>
    </source>
</evidence>
<evidence type="ECO:0000305" key="3"/>
<reference key="1">
    <citation type="journal article" date="2001" name="Nature">
        <title>Genome sequence and gene compaction of the eukaryote parasite Encephalitozoon cuniculi.</title>
        <authorList>
            <person name="Katinka M.D."/>
            <person name="Duprat S."/>
            <person name="Cornillot E."/>
            <person name="Metenier G."/>
            <person name="Thomarat F."/>
            <person name="Prensier G."/>
            <person name="Barbe V."/>
            <person name="Peyretaillade E."/>
            <person name="Brottier P."/>
            <person name="Wincker P."/>
            <person name="Delbac F."/>
            <person name="El Alaoui H."/>
            <person name="Peyret P."/>
            <person name="Saurin W."/>
            <person name="Gouy M."/>
            <person name="Weissenbach J."/>
            <person name="Vivares C.P."/>
        </authorList>
    </citation>
    <scope>NUCLEOTIDE SEQUENCE [LARGE SCALE GENOMIC DNA]</scope>
    <source>
        <strain>GB-M1</strain>
    </source>
</reference>
<reference key="2">
    <citation type="journal article" date="2009" name="BMC Genomics">
        <title>Identification of transcriptional signals in Encephalitozoon cuniculi widespread among Microsporidia phylum: support for accurate structural genome annotation.</title>
        <authorList>
            <person name="Peyretaillade E."/>
            <person name="Goncalves O."/>
            <person name="Terrat S."/>
            <person name="Dugat-Bony E."/>
            <person name="Wincker P."/>
            <person name="Cornman R.S."/>
            <person name="Evans J.D."/>
            <person name="Delbac F."/>
            <person name="Peyret P."/>
        </authorList>
    </citation>
    <scope>GENOME REANNOTATION</scope>
    <source>
        <strain>GB-M1</strain>
    </source>
</reference>
<reference key="3">
    <citation type="journal article" date="2006" name="Proteomics">
        <title>Proteomic analysis of the eukaryotic parasite Encephalitozoon cuniculi (microsporidia): a reference map for proteins expressed in late sporogonial stages.</title>
        <authorList>
            <person name="Brosson D."/>
            <person name="Kuhn L."/>
            <person name="Delbac F."/>
            <person name="Garin J."/>
            <person name="Vivares C.P."/>
            <person name="Texier C."/>
        </authorList>
    </citation>
    <scope>IDENTIFICATION BY MASS SPECTROMETRY [LARGE SCALE ANALYSIS]</scope>
    <scope>DEVELOPMENTAL STAGE</scope>
    <scope>SUBCELLULAR LOCATION</scope>
</reference>
<keyword id="KW-0256">Endoplasmic reticulum</keyword>
<keyword id="KW-0931">ER-Golgi transport</keyword>
<keyword id="KW-0333">Golgi apparatus</keyword>
<keyword id="KW-1185">Reference proteome</keyword>
<keyword id="KW-0813">Transport</keyword>
<comment type="function">
    <text>May play a role in vesicular transport from endoplasmic reticulum to Golgi.</text>
</comment>
<comment type="subunit">
    <text evidence="1">Part of the multisubunit TRAPP (transport protein particle) complex.</text>
</comment>
<comment type="subcellular location">
    <subcellularLocation>
        <location evidence="1">Golgi apparatus</location>
        <location evidence="1">cis-Golgi network</location>
    </subcellularLocation>
    <subcellularLocation>
        <location evidence="1">Endoplasmic reticulum</location>
    </subcellularLocation>
</comment>
<comment type="developmental stage">
    <text evidence="2">Expressed in late sporogonial stages.</text>
</comment>
<comment type="similarity">
    <text evidence="3">Belongs to the TRAPP small subunits family. BET3 subfamily.</text>
</comment>
<organism>
    <name type="scientific">Encephalitozoon cuniculi (strain GB-M1)</name>
    <name type="common">Microsporidian parasite</name>
    <dbReference type="NCBI Taxonomy" id="284813"/>
    <lineage>
        <taxon>Eukaryota</taxon>
        <taxon>Fungi</taxon>
        <taxon>Fungi incertae sedis</taxon>
        <taxon>Microsporidia</taxon>
        <taxon>Unikaryonidae</taxon>
        <taxon>Encephalitozoon</taxon>
    </lineage>
</organism>
<dbReference type="EMBL" id="AL590450">
    <property type="protein sequence ID" value="CAD26042.2"/>
    <property type="molecule type" value="Genomic_DNA"/>
</dbReference>
<dbReference type="RefSeq" id="NP_586438.1">
    <property type="nucleotide sequence ID" value="NM_001042271.1"/>
</dbReference>
<dbReference type="SMR" id="Q8SU25"/>
<dbReference type="FunCoup" id="Q8SU25">
    <property type="interactions" value="65"/>
</dbReference>
<dbReference type="STRING" id="284813.Q8SU25"/>
<dbReference type="GeneID" id="860092"/>
<dbReference type="KEGG" id="ecu:ECU11_1320"/>
<dbReference type="VEuPathDB" id="MicrosporidiaDB:ECU11_1320"/>
<dbReference type="HOGENOM" id="CLU_142964_0_0_1"/>
<dbReference type="InParanoid" id="Q8SU25"/>
<dbReference type="OrthoDB" id="10254842at2759"/>
<dbReference type="Proteomes" id="UP000000819">
    <property type="component" value="Chromosome XI"/>
</dbReference>
<dbReference type="GO" id="GO:0005783">
    <property type="term" value="C:endoplasmic reticulum"/>
    <property type="evidence" value="ECO:0007669"/>
    <property type="project" value="UniProtKB-SubCell"/>
</dbReference>
<dbReference type="GO" id="GO:1990070">
    <property type="term" value="C:TRAPPI protein complex"/>
    <property type="evidence" value="ECO:0007669"/>
    <property type="project" value="TreeGrafter"/>
</dbReference>
<dbReference type="GO" id="GO:1990071">
    <property type="term" value="C:TRAPPII protein complex"/>
    <property type="evidence" value="ECO:0007669"/>
    <property type="project" value="TreeGrafter"/>
</dbReference>
<dbReference type="GO" id="GO:1990072">
    <property type="term" value="C:TRAPPIII protein complex"/>
    <property type="evidence" value="ECO:0007669"/>
    <property type="project" value="TreeGrafter"/>
</dbReference>
<dbReference type="GO" id="GO:0006888">
    <property type="term" value="P:endoplasmic reticulum to Golgi vesicle-mediated transport"/>
    <property type="evidence" value="ECO:0007669"/>
    <property type="project" value="TreeGrafter"/>
</dbReference>
<dbReference type="CDD" id="cd14943">
    <property type="entry name" value="TRAPPC5_Trs31"/>
    <property type="match status" value="1"/>
</dbReference>
<dbReference type="Gene3D" id="3.30.1380.20">
    <property type="entry name" value="Trafficking protein particle complex subunit 3"/>
    <property type="match status" value="1"/>
</dbReference>
<dbReference type="InterPro" id="IPR024096">
    <property type="entry name" value="NO_sig/Golgi_transp_ligand-bd"/>
</dbReference>
<dbReference type="InterPro" id="IPR016696">
    <property type="entry name" value="TRAPP-I_su5"/>
</dbReference>
<dbReference type="InterPro" id="IPR007194">
    <property type="entry name" value="TRAPP_component"/>
</dbReference>
<dbReference type="PANTHER" id="PTHR20902">
    <property type="entry name" value="41-2 PROTEIN ANTIGEN-RELATED"/>
    <property type="match status" value="1"/>
</dbReference>
<dbReference type="PANTHER" id="PTHR20902:SF0">
    <property type="entry name" value="TRAFFICKING PROTEIN PARTICLE COMPLEX SUBUNIT 5"/>
    <property type="match status" value="1"/>
</dbReference>
<dbReference type="Pfam" id="PF04051">
    <property type="entry name" value="TRAPP"/>
    <property type="match status" value="1"/>
</dbReference>
<dbReference type="PIRSF" id="PIRSF017479">
    <property type="entry name" value="TRAPP_I_complex_Trs31"/>
    <property type="match status" value="1"/>
</dbReference>
<dbReference type="SUPFAM" id="SSF111126">
    <property type="entry name" value="Ligand-binding domain in the NO signalling and Golgi transport"/>
    <property type="match status" value="1"/>
</dbReference>